<proteinExistence type="evidence at protein level"/>
<keyword id="KW-0007">Acetylation</keyword>
<keyword id="KW-0489">Methyltransferase</keyword>
<keyword id="KW-0506">mRNA capping</keyword>
<keyword id="KW-0507">mRNA processing</keyword>
<keyword id="KW-0539">Nucleus</keyword>
<keyword id="KW-0597">Phosphoprotein</keyword>
<keyword id="KW-1185">Reference proteome</keyword>
<keyword id="KW-0949">S-adenosyl-L-methionine</keyword>
<keyword id="KW-0808">Transferase</keyword>
<gene>
    <name type="primary">Cmtr1</name>
    <name type="synonym">Ftsjd2</name>
    <name type="synonym">Kiaa0082</name>
</gene>
<reference key="1">
    <citation type="journal article" date="2005" name="Science">
        <title>The transcriptional landscape of the mammalian genome.</title>
        <authorList>
            <person name="Carninci P."/>
            <person name="Kasukawa T."/>
            <person name="Katayama S."/>
            <person name="Gough J."/>
            <person name="Frith M.C."/>
            <person name="Maeda N."/>
            <person name="Oyama R."/>
            <person name="Ravasi T."/>
            <person name="Lenhard B."/>
            <person name="Wells C."/>
            <person name="Kodzius R."/>
            <person name="Shimokawa K."/>
            <person name="Bajic V.B."/>
            <person name="Brenner S.E."/>
            <person name="Batalov S."/>
            <person name="Forrest A.R."/>
            <person name="Zavolan M."/>
            <person name="Davis M.J."/>
            <person name="Wilming L.G."/>
            <person name="Aidinis V."/>
            <person name="Allen J.E."/>
            <person name="Ambesi-Impiombato A."/>
            <person name="Apweiler R."/>
            <person name="Aturaliya R.N."/>
            <person name="Bailey T.L."/>
            <person name="Bansal M."/>
            <person name="Baxter L."/>
            <person name="Beisel K.W."/>
            <person name="Bersano T."/>
            <person name="Bono H."/>
            <person name="Chalk A.M."/>
            <person name="Chiu K.P."/>
            <person name="Choudhary V."/>
            <person name="Christoffels A."/>
            <person name="Clutterbuck D.R."/>
            <person name="Crowe M.L."/>
            <person name="Dalla E."/>
            <person name="Dalrymple B.P."/>
            <person name="de Bono B."/>
            <person name="Della Gatta G."/>
            <person name="di Bernardo D."/>
            <person name="Down T."/>
            <person name="Engstrom P."/>
            <person name="Fagiolini M."/>
            <person name="Faulkner G."/>
            <person name="Fletcher C.F."/>
            <person name="Fukushima T."/>
            <person name="Furuno M."/>
            <person name="Futaki S."/>
            <person name="Gariboldi M."/>
            <person name="Georgii-Hemming P."/>
            <person name="Gingeras T.R."/>
            <person name="Gojobori T."/>
            <person name="Green R.E."/>
            <person name="Gustincich S."/>
            <person name="Harbers M."/>
            <person name="Hayashi Y."/>
            <person name="Hensch T.K."/>
            <person name="Hirokawa N."/>
            <person name="Hill D."/>
            <person name="Huminiecki L."/>
            <person name="Iacono M."/>
            <person name="Ikeo K."/>
            <person name="Iwama A."/>
            <person name="Ishikawa T."/>
            <person name="Jakt M."/>
            <person name="Kanapin A."/>
            <person name="Katoh M."/>
            <person name="Kawasawa Y."/>
            <person name="Kelso J."/>
            <person name="Kitamura H."/>
            <person name="Kitano H."/>
            <person name="Kollias G."/>
            <person name="Krishnan S.P."/>
            <person name="Kruger A."/>
            <person name="Kummerfeld S.K."/>
            <person name="Kurochkin I.V."/>
            <person name="Lareau L.F."/>
            <person name="Lazarevic D."/>
            <person name="Lipovich L."/>
            <person name="Liu J."/>
            <person name="Liuni S."/>
            <person name="McWilliam S."/>
            <person name="Madan Babu M."/>
            <person name="Madera M."/>
            <person name="Marchionni L."/>
            <person name="Matsuda H."/>
            <person name="Matsuzawa S."/>
            <person name="Miki H."/>
            <person name="Mignone F."/>
            <person name="Miyake S."/>
            <person name="Morris K."/>
            <person name="Mottagui-Tabar S."/>
            <person name="Mulder N."/>
            <person name="Nakano N."/>
            <person name="Nakauchi H."/>
            <person name="Ng P."/>
            <person name="Nilsson R."/>
            <person name="Nishiguchi S."/>
            <person name="Nishikawa S."/>
            <person name="Nori F."/>
            <person name="Ohara O."/>
            <person name="Okazaki Y."/>
            <person name="Orlando V."/>
            <person name="Pang K.C."/>
            <person name="Pavan W.J."/>
            <person name="Pavesi G."/>
            <person name="Pesole G."/>
            <person name="Petrovsky N."/>
            <person name="Piazza S."/>
            <person name="Reed J."/>
            <person name="Reid J.F."/>
            <person name="Ring B.Z."/>
            <person name="Ringwald M."/>
            <person name="Rost B."/>
            <person name="Ruan Y."/>
            <person name="Salzberg S.L."/>
            <person name="Sandelin A."/>
            <person name="Schneider C."/>
            <person name="Schoenbach C."/>
            <person name="Sekiguchi K."/>
            <person name="Semple C.A."/>
            <person name="Seno S."/>
            <person name="Sessa L."/>
            <person name="Sheng Y."/>
            <person name="Shibata Y."/>
            <person name="Shimada H."/>
            <person name="Shimada K."/>
            <person name="Silva D."/>
            <person name="Sinclair B."/>
            <person name="Sperling S."/>
            <person name="Stupka E."/>
            <person name="Sugiura K."/>
            <person name="Sultana R."/>
            <person name="Takenaka Y."/>
            <person name="Taki K."/>
            <person name="Tammoja K."/>
            <person name="Tan S.L."/>
            <person name="Tang S."/>
            <person name="Taylor M.S."/>
            <person name="Tegner J."/>
            <person name="Teichmann S.A."/>
            <person name="Ueda H.R."/>
            <person name="van Nimwegen E."/>
            <person name="Verardo R."/>
            <person name="Wei C.L."/>
            <person name="Yagi K."/>
            <person name="Yamanishi H."/>
            <person name="Zabarovsky E."/>
            <person name="Zhu S."/>
            <person name="Zimmer A."/>
            <person name="Hide W."/>
            <person name="Bult C."/>
            <person name="Grimmond S.M."/>
            <person name="Teasdale R.D."/>
            <person name="Liu E.T."/>
            <person name="Brusic V."/>
            <person name="Quackenbush J."/>
            <person name="Wahlestedt C."/>
            <person name="Mattick J.S."/>
            <person name="Hume D.A."/>
            <person name="Kai C."/>
            <person name="Sasaki D."/>
            <person name="Tomaru Y."/>
            <person name="Fukuda S."/>
            <person name="Kanamori-Katayama M."/>
            <person name="Suzuki M."/>
            <person name="Aoki J."/>
            <person name="Arakawa T."/>
            <person name="Iida J."/>
            <person name="Imamura K."/>
            <person name="Itoh M."/>
            <person name="Kato T."/>
            <person name="Kawaji H."/>
            <person name="Kawagashira N."/>
            <person name="Kawashima T."/>
            <person name="Kojima M."/>
            <person name="Kondo S."/>
            <person name="Konno H."/>
            <person name="Nakano K."/>
            <person name="Ninomiya N."/>
            <person name="Nishio T."/>
            <person name="Okada M."/>
            <person name="Plessy C."/>
            <person name="Shibata K."/>
            <person name="Shiraki T."/>
            <person name="Suzuki S."/>
            <person name="Tagami M."/>
            <person name="Waki K."/>
            <person name="Watahiki A."/>
            <person name="Okamura-Oho Y."/>
            <person name="Suzuki H."/>
            <person name="Kawai J."/>
            <person name="Hayashizaki Y."/>
        </authorList>
    </citation>
    <scope>NUCLEOTIDE SEQUENCE [LARGE SCALE MRNA]</scope>
    <source>
        <strain>C57BL/6J</strain>
        <strain>NOD</strain>
        <tissue>Brain cortex</tissue>
        <tissue>Dendritic cell</tissue>
        <tissue>Embryonic stem cell</tissue>
        <tissue>Liver</tissue>
        <tissue>Macrophage</tissue>
        <tissue>Thymus</tissue>
    </source>
</reference>
<reference key="2">
    <citation type="journal article" date="2004" name="Genome Res.">
        <title>The status, quality, and expansion of the NIH full-length cDNA project: the Mammalian Gene Collection (MGC).</title>
        <authorList>
            <consortium name="The MGC Project Team"/>
        </authorList>
    </citation>
    <scope>NUCLEOTIDE SEQUENCE [LARGE SCALE MRNA]</scope>
    <source>
        <tissue>Mammary tumor</tissue>
    </source>
</reference>
<reference key="3">
    <citation type="journal article" date="2004" name="DNA Res.">
        <title>Prediction of the coding sequences of mouse homologues of KIAA gene: IV. The complete nucleotide sequences of 500 mouse KIAA-homologous cDNAs identified by screening of terminal sequences of cDNA clones randomly sampled from size-fractionated libraries.</title>
        <authorList>
            <person name="Okazaki N."/>
            <person name="Kikuno R."/>
            <person name="Ohara R."/>
            <person name="Inamoto S."/>
            <person name="Koseki H."/>
            <person name="Hiraoka S."/>
            <person name="Saga Y."/>
            <person name="Seino S."/>
            <person name="Nishimura M."/>
            <person name="Kaisho T."/>
            <person name="Hoshino K."/>
            <person name="Kitamura H."/>
            <person name="Nagase T."/>
            <person name="Ohara O."/>
            <person name="Koga H."/>
        </authorList>
    </citation>
    <scope>NUCLEOTIDE SEQUENCE [LARGE SCALE MRNA] OF 115-837</scope>
    <source>
        <tissue>Embryonic tail</tissue>
    </source>
</reference>
<reference key="4">
    <citation type="journal article" date="2007" name="Proc. Natl. Acad. Sci. U.S.A.">
        <title>Large-scale phosphorylation analysis of mouse liver.</title>
        <authorList>
            <person name="Villen J."/>
            <person name="Beausoleil S.A."/>
            <person name="Gerber S.A."/>
            <person name="Gygi S.P."/>
        </authorList>
    </citation>
    <scope>PHOSPHORYLATION [LARGE SCALE ANALYSIS] AT SER-27 AND SER-30</scope>
    <scope>IDENTIFICATION BY MASS SPECTROMETRY [LARGE SCALE ANALYSIS]</scope>
    <source>
        <tissue>Liver</tissue>
    </source>
</reference>
<reference key="5">
    <citation type="journal article" date="2009" name="Mol. Cell. Proteomics">
        <title>Large scale localization of protein phosphorylation by use of electron capture dissociation mass spectrometry.</title>
        <authorList>
            <person name="Sweet S.M."/>
            <person name="Bailey C.M."/>
            <person name="Cunningham D.L."/>
            <person name="Heath J.K."/>
            <person name="Cooper H.J."/>
        </authorList>
    </citation>
    <scope>IDENTIFICATION BY MASS SPECTROMETRY [LARGE SCALE ANALYSIS]</scope>
    <source>
        <tissue>Embryonic fibroblast</tissue>
    </source>
</reference>
<reference key="6">
    <citation type="journal article" date="2010" name="Cell">
        <title>A tissue-specific atlas of mouse protein phosphorylation and expression.</title>
        <authorList>
            <person name="Huttlin E.L."/>
            <person name="Jedrychowski M.P."/>
            <person name="Elias J.E."/>
            <person name="Goswami T."/>
            <person name="Rad R."/>
            <person name="Beausoleil S.A."/>
            <person name="Villen J."/>
            <person name="Haas W."/>
            <person name="Sowa M.E."/>
            <person name="Gygi S.P."/>
        </authorList>
    </citation>
    <scope>PHOSPHORYLATION [LARGE SCALE ANALYSIS] AT SER-27 AND SER-30</scope>
    <scope>IDENTIFICATION BY MASS SPECTROMETRY [LARGE SCALE ANALYSIS]</scope>
    <source>
        <tissue>Brain</tissue>
        <tissue>Brown adipose tissue</tissue>
        <tissue>Heart</tissue>
        <tissue>Kidney</tissue>
        <tissue>Liver</tissue>
        <tissue>Lung</tissue>
        <tissue>Pancreas</tissue>
        <tissue>Spleen</tissue>
        <tissue>Testis</tissue>
    </source>
</reference>
<accession>Q9DBC3</accession>
<accession>Q3U3G5</accession>
<accession>Q3U7Y9</accession>
<accession>Q6A0D5</accession>
<accession>Q8C7V0</accession>
<organism>
    <name type="scientific">Mus musculus</name>
    <name type="common">Mouse</name>
    <dbReference type="NCBI Taxonomy" id="10090"/>
    <lineage>
        <taxon>Eukaryota</taxon>
        <taxon>Metazoa</taxon>
        <taxon>Chordata</taxon>
        <taxon>Craniata</taxon>
        <taxon>Vertebrata</taxon>
        <taxon>Euteleostomi</taxon>
        <taxon>Mammalia</taxon>
        <taxon>Eutheria</taxon>
        <taxon>Euarchontoglires</taxon>
        <taxon>Glires</taxon>
        <taxon>Rodentia</taxon>
        <taxon>Myomorpha</taxon>
        <taxon>Muroidea</taxon>
        <taxon>Muridae</taxon>
        <taxon>Murinae</taxon>
        <taxon>Mus</taxon>
        <taxon>Mus</taxon>
    </lineage>
</organism>
<name>CMTR1_MOUSE</name>
<comment type="function">
    <text evidence="2">S-adenosyl-L-methionine-dependent methyltransferase that mediates mRNA cap1 2'-O-ribose methylation to the 5'-cap structure of mRNAs. Methylates the ribose of the first nucleotide of a m(7)GpppG-capped mRNA and small nuclear RNA (snRNA) to produce m(7)GpppRm (cap1). Displays a preference for cap0 transcripts. Cap1 modification is linked to higher levels of translation. May be involved in the interferon response pathway.</text>
</comment>
<comment type="catalytic activity">
    <reaction evidence="2">
        <text>a 5'-end (N(7)-methyl 5'-triphosphoguanosine)-ribonucleoside in mRNA + S-adenosyl-L-methionine = a 5'-end (N(7)-methyl 5'-triphosphoguanosine)-(2'-O-methyl-ribonucleoside) in mRNA + S-adenosyl-L-homocysteine + H(+)</text>
        <dbReference type="Rhea" id="RHEA:67020"/>
        <dbReference type="Rhea" id="RHEA-COMP:17167"/>
        <dbReference type="Rhea" id="RHEA-COMP:17168"/>
        <dbReference type="ChEBI" id="CHEBI:15378"/>
        <dbReference type="ChEBI" id="CHEBI:57856"/>
        <dbReference type="ChEBI" id="CHEBI:59789"/>
        <dbReference type="ChEBI" id="CHEBI:156461"/>
        <dbReference type="ChEBI" id="CHEBI:167609"/>
        <dbReference type="EC" id="2.1.1.57"/>
    </reaction>
</comment>
<comment type="subunit">
    <text evidence="2">Interacts with POLR2A (via C-terminus).</text>
</comment>
<comment type="subcellular location">
    <subcellularLocation>
        <location evidence="2">Nucleus</location>
    </subcellularLocation>
</comment>
<comment type="sequence caution" evidence="8">
    <conflict type="frameshift">
        <sequence resource="EMBL-CDS" id="BAD32161"/>
    </conflict>
</comment>
<evidence type="ECO:0000250" key="1"/>
<evidence type="ECO:0000250" key="2">
    <source>
        <dbReference type="UniProtKB" id="Q8N1G2"/>
    </source>
</evidence>
<evidence type="ECO:0000255" key="3">
    <source>
        <dbReference type="PROSITE-ProRule" id="PRU00092"/>
    </source>
</evidence>
<evidence type="ECO:0000255" key="4">
    <source>
        <dbReference type="PROSITE-ProRule" id="PRU00224"/>
    </source>
</evidence>
<evidence type="ECO:0000255" key="5">
    <source>
        <dbReference type="PROSITE-ProRule" id="PRU00768"/>
    </source>
</evidence>
<evidence type="ECO:0000255" key="6">
    <source>
        <dbReference type="PROSITE-ProRule" id="PRU00945"/>
    </source>
</evidence>
<evidence type="ECO:0000256" key="7">
    <source>
        <dbReference type="SAM" id="MobiDB-lite"/>
    </source>
</evidence>
<evidence type="ECO:0000305" key="8"/>
<evidence type="ECO:0007744" key="9">
    <source>
    </source>
</evidence>
<evidence type="ECO:0007744" key="10">
    <source>
    </source>
</evidence>
<feature type="chain" id="PRO_0000251240" description="Cap-specific mRNA (nucleoside-2'-O-)-methyltransferase 1">
    <location>
        <begin position="1"/>
        <end position="837"/>
    </location>
</feature>
<feature type="domain" description="G-patch" evidence="3">
    <location>
        <begin position="86"/>
        <end position="132"/>
    </location>
</feature>
<feature type="domain" description="RrmJ-type SAM-dependent 2'-O-MTase" evidence="6">
    <location>
        <begin position="230"/>
        <end position="449"/>
    </location>
</feature>
<feature type="domain" description="WW" evidence="4">
    <location>
        <begin position="751"/>
        <end position="785"/>
    </location>
</feature>
<feature type="region of interest" description="Disordered" evidence="7">
    <location>
        <begin position="1"/>
        <end position="66"/>
    </location>
</feature>
<feature type="region of interest" description="Interaction with POLR2A" evidence="1">
    <location>
        <begin position="726"/>
        <end position="834"/>
    </location>
</feature>
<feature type="short sequence motif" description="Bipartite nuclear localization signal" evidence="5">
    <location>
        <begin position="2"/>
        <end position="18"/>
    </location>
</feature>
<feature type="compositionally biased region" description="Basic and acidic residues" evidence="7">
    <location>
        <begin position="56"/>
        <end position="66"/>
    </location>
</feature>
<feature type="active site" evidence="2">
    <location>
        <position position="238"/>
    </location>
</feature>
<feature type="active site" evidence="2">
    <location>
        <position position="363"/>
    </location>
</feature>
<feature type="active site" description="Proton acceptor" evidence="6">
    <location>
        <position position="403"/>
    </location>
</feature>
<feature type="binding site" evidence="2">
    <location>
        <begin position="202"/>
        <end position="206"/>
    </location>
    <ligand>
        <name>substrate</name>
    </ligand>
</feature>
<feature type="binding site" evidence="2">
    <location>
        <position position="217"/>
    </location>
    <ligand>
        <name>substrate</name>
    </ligand>
</feature>
<feature type="binding site" evidence="2">
    <location>
        <position position="233"/>
    </location>
    <ligand>
        <name>S-adenosyl-L-methionine</name>
        <dbReference type="ChEBI" id="CHEBI:59789"/>
    </ligand>
</feature>
<feature type="binding site" evidence="2">
    <location>
        <begin position="276"/>
        <end position="282"/>
    </location>
    <ligand>
        <name>S-adenosyl-L-methionine</name>
        <dbReference type="ChEBI" id="CHEBI:59789"/>
    </ligand>
</feature>
<feature type="binding site" evidence="2">
    <location>
        <begin position="334"/>
        <end position="335"/>
    </location>
    <ligand>
        <name>S-adenosyl-L-methionine</name>
        <dbReference type="ChEBI" id="CHEBI:59789"/>
    </ligand>
</feature>
<feature type="binding site" evidence="2">
    <location>
        <begin position="373"/>
        <end position="375"/>
    </location>
    <ligand>
        <name>substrate</name>
    </ligand>
</feature>
<feature type="binding site" evidence="2">
    <location>
        <position position="438"/>
    </location>
    <ligand>
        <name>substrate</name>
    </ligand>
</feature>
<feature type="modified residue" description="Phosphoserine" evidence="9 10">
    <location>
        <position position="27"/>
    </location>
</feature>
<feature type="modified residue" description="Phosphoserine" evidence="9 10">
    <location>
        <position position="30"/>
    </location>
</feature>
<feature type="modified residue" description="Phosphoserine" evidence="2">
    <location>
        <position position="52"/>
    </location>
</feature>
<feature type="modified residue" description="Phosphoserine" evidence="2">
    <location>
        <position position="90"/>
    </location>
</feature>
<feature type="modified residue" description="N6-acetyllysine" evidence="2">
    <location>
        <position position="107"/>
    </location>
</feature>
<feature type="sequence conflict" description="In Ref. 1; BAE32821." evidence="8" ref="1">
    <original>C</original>
    <variation>W</variation>
    <location>
        <position position="151"/>
    </location>
</feature>
<feature type="sequence conflict" description="In Ref. 1; BAE31091/BAE31230." evidence="8" ref="1">
    <original>L</original>
    <variation>F</variation>
    <location>
        <position position="378"/>
    </location>
</feature>
<feature type="sequence conflict" description="In Ref. 1; BAE31091/BAE31230." evidence="8" ref="1">
    <original>L</original>
    <variation>I</variation>
    <location>
        <position position="459"/>
    </location>
</feature>
<feature type="sequence conflict" description="In Ref. 1; BAE31091/BAE31230." evidence="8" ref="1">
    <original>E</original>
    <variation>V</variation>
    <location>
        <position position="500"/>
    </location>
</feature>
<feature type="sequence conflict" description="In Ref. 1; BAC33600." evidence="8" ref="1">
    <original>V</original>
    <variation>I</variation>
    <location>
        <position position="689"/>
    </location>
</feature>
<sequence>MKRRTDPECTAPLKKQKRIGELARHLSSTSDDEPLSSVNHAAKASATSLSGSDSETEGKQPCSDDFKDAFKADSLVEGTSSRYSMYNSVSQRLMAKMGFREGEGLGKYSQGRKDIVETSNQKGRRGLGLTLQGFDQELNVDWRDEPEPNACEQVSWFPECTTEIPDSREMSDWMVVGKRKMVIEDETEFCGEELLHSMLKCKSVFDILDGEEMRRARTRANPYEMIRGVFFLNRAAMKMANMDFVFDRMFTNPLDSSGKPLLKESDIDLLYFADVCAGPGGFSEYVLWRKKWHAKGFGMTLKGPNDFKLEDFYSASSELFEPYYGEGGVDGDGDITRPENINAFRNFVLDNTDRKGVHFVMADGGFSVEGQENLQEILSKQLLLCQFLMALSVVRTGGHFVCKTFDLFTPFSVGLIYLLYCCFERVCLFKPITSRPANSERYVVCKGLKVGIDDVREYLFSVNIKLNQLRNTESDVNLVVPLMVIKGDHEFNDYMIRSNESYCSLQIKALAKIHAFVQDTTLSEPRQAEIRKECLQLWKIPDQARVAPSSSDPKFKFFELIKDTDINIFSYKPTLLTAKTLEKIRPVLEYRCMVSGSEQKFLLGLGKSQIYTWDGRQSDRWVKLDLKTELPRDTLLCVEIVHELKGEGKAQRKISAIHILDVLVLNGSDVREQHFNQRIQLAEKFVKAVSKPSRPDMNPIRVKEVYRLEEMEKIFVRLEMKLIKGSGGTPKLSYTGRDDRHFVPTGVYIVRTVNEPWTMGFSKSNNRKFFYNKKTQKSVYALPTESIAPFHTCYYSRLFWEWGDGFHMRDSQKPQDPDKLSKEDVLSFIQSHNPLGP</sequence>
<dbReference type="EC" id="2.1.1.57" evidence="2"/>
<dbReference type="EMBL" id="AK005044">
    <property type="protein sequence ID" value="BAB23771.1"/>
    <property type="molecule type" value="mRNA"/>
</dbReference>
<dbReference type="EMBL" id="AK042060">
    <property type="protein sequence ID" value="BAC31146.1"/>
    <property type="molecule type" value="mRNA"/>
</dbReference>
<dbReference type="EMBL" id="AK043733">
    <property type="protein sequence ID" value="BAC31634.1"/>
    <property type="molecule type" value="mRNA"/>
</dbReference>
<dbReference type="EMBL" id="AK049190">
    <property type="protein sequence ID" value="BAC33600.1"/>
    <property type="molecule type" value="mRNA"/>
</dbReference>
<dbReference type="EMBL" id="AK080379">
    <property type="protein sequence ID" value="BAC37899.1"/>
    <property type="molecule type" value="mRNA"/>
</dbReference>
<dbReference type="EMBL" id="AK150392">
    <property type="protein sequence ID" value="BAE29520.1"/>
    <property type="molecule type" value="mRNA"/>
</dbReference>
<dbReference type="EMBL" id="AK151194">
    <property type="protein sequence ID" value="BAE30191.1"/>
    <property type="molecule type" value="mRNA"/>
</dbReference>
<dbReference type="EMBL" id="AK152276">
    <property type="protein sequence ID" value="BAE31091.1"/>
    <property type="molecule type" value="mRNA"/>
</dbReference>
<dbReference type="EMBL" id="AK152452">
    <property type="protein sequence ID" value="BAE31230.1"/>
    <property type="molecule type" value="mRNA"/>
</dbReference>
<dbReference type="EMBL" id="AK152799">
    <property type="protein sequence ID" value="BAE31504.1"/>
    <property type="molecule type" value="mRNA"/>
</dbReference>
<dbReference type="EMBL" id="AK153021">
    <property type="protein sequence ID" value="BAE31655.1"/>
    <property type="molecule type" value="mRNA"/>
</dbReference>
<dbReference type="EMBL" id="AK153066">
    <property type="protein sequence ID" value="BAE31692.1"/>
    <property type="molecule type" value="mRNA"/>
</dbReference>
<dbReference type="EMBL" id="AK154773">
    <property type="protein sequence ID" value="BAE32821.1"/>
    <property type="molecule type" value="mRNA"/>
</dbReference>
<dbReference type="EMBL" id="BC024691">
    <property type="protein sequence ID" value="AAH24691.1"/>
    <property type="molecule type" value="mRNA"/>
</dbReference>
<dbReference type="EMBL" id="AK172883">
    <property type="protein sequence ID" value="BAD32161.1"/>
    <property type="status" value="ALT_FRAME"/>
    <property type="molecule type" value="Transcribed_RNA"/>
</dbReference>
<dbReference type="CCDS" id="CCDS37539.1"/>
<dbReference type="RefSeq" id="NP_083067.1">
    <property type="nucleotide sequence ID" value="NM_028791.6"/>
</dbReference>
<dbReference type="SMR" id="Q9DBC3"/>
<dbReference type="BioGRID" id="216534">
    <property type="interactions" value="7"/>
</dbReference>
<dbReference type="FunCoup" id="Q9DBC3">
    <property type="interactions" value="5945"/>
</dbReference>
<dbReference type="STRING" id="10090.ENSMUSP00000024816"/>
<dbReference type="GlyGen" id="Q9DBC3">
    <property type="glycosylation" value="2 sites, 1 N-linked glycan (1 site), 1 O-linked glycan (1 site)"/>
</dbReference>
<dbReference type="iPTMnet" id="Q9DBC3"/>
<dbReference type="PhosphoSitePlus" id="Q9DBC3"/>
<dbReference type="SwissPalm" id="Q9DBC3"/>
<dbReference type="jPOST" id="Q9DBC3"/>
<dbReference type="PaxDb" id="10090-ENSMUSP00000024816"/>
<dbReference type="PeptideAtlas" id="Q9DBC3"/>
<dbReference type="ProteomicsDB" id="283866"/>
<dbReference type="Pumba" id="Q9DBC3"/>
<dbReference type="Antibodypedia" id="29815">
    <property type="antibodies" value="60 antibodies from 13 providers"/>
</dbReference>
<dbReference type="Ensembl" id="ENSMUST00000024816.13">
    <property type="protein sequence ID" value="ENSMUSP00000024816.7"/>
    <property type="gene ID" value="ENSMUSG00000024019.19"/>
</dbReference>
<dbReference type="GeneID" id="74157"/>
<dbReference type="KEGG" id="mmu:74157"/>
<dbReference type="UCSC" id="uc008bth.1">
    <property type="organism name" value="mouse"/>
</dbReference>
<dbReference type="AGR" id="MGI:1921407"/>
<dbReference type="CTD" id="23070"/>
<dbReference type="MGI" id="MGI:1921407">
    <property type="gene designation" value="Cmtr1"/>
</dbReference>
<dbReference type="VEuPathDB" id="HostDB:ENSMUSG00000024019"/>
<dbReference type="eggNOG" id="KOG3673">
    <property type="taxonomic scope" value="Eukaryota"/>
</dbReference>
<dbReference type="GeneTree" id="ENSGT00940000157172"/>
<dbReference type="HOGENOM" id="CLU_011097_0_0_1"/>
<dbReference type="InParanoid" id="Q9DBC3"/>
<dbReference type="OMA" id="CTLFLCK"/>
<dbReference type="OrthoDB" id="23556at9989"/>
<dbReference type="PhylomeDB" id="Q9DBC3"/>
<dbReference type="TreeFam" id="TF314897"/>
<dbReference type="BioGRID-ORCS" id="74157">
    <property type="hits" value="25 hits in 78 CRISPR screens"/>
</dbReference>
<dbReference type="PRO" id="PR:Q9DBC3"/>
<dbReference type="Proteomes" id="UP000000589">
    <property type="component" value="Chromosome 17"/>
</dbReference>
<dbReference type="RNAct" id="Q9DBC3">
    <property type="molecule type" value="protein"/>
</dbReference>
<dbReference type="Bgee" id="ENSMUSG00000024019">
    <property type="expression patterns" value="Expressed in granulocyte and 83 other cell types or tissues"/>
</dbReference>
<dbReference type="ExpressionAtlas" id="Q9DBC3">
    <property type="expression patterns" value="baseline and differential"/>
</dbReference>
<dbReference type="GO" id="GO:0005654">
    <property type="term" value="C:nucleoplasm"/>
    <property type="evidence" value="ECO:0007669"/>
    <property type="project" value="Ensembl"/>
</dbReference>
<dbReference type="GO" id="GO:0005634">
    <property type="term" value="C:nucleus"/>
    <property type="evidence" value="ECO:0000250"/>
    <property type="project" value="UniProtKB"/>
</dbReference>
<dbReference type="GO" id="GO:0004483">
    <property type="term" value="F:mRNA (nucleoside-2'-O-)-methyltransferase activity"/>
    <property type="evidence" value="ECO:0000250"/>
    <property type="project" value="UniProtKB"/>
</dbReference>
<dbReference type="GO" id="GO:0003676">
    <property type="term" value="F:nucleic acid binding"/>
    <property type="evidence" value="ECO:0007669"/>
    <property type="project" value="InterPro"/>
</dbReference>
<dbReference type="GO" id="GO:0006370">
    <property type="term" value="P:7-methylguanosine mRNA capping"/>
    <property type="evidence" value="ECO:0000250"/>
    <property type="project" value="UniProtKB"/>
</dbReference>
<dbReference type="GO" id="GO:0032259">
    <property type="term" value="P:methylation"/>
    <property type="evidence" value="ECO:0007669"/>
    <property type="project" value="UniProtKB-KW"/>
</dbReference>
<dbReference type="GO" id="GO:0006397">
    <property type="term" value="P:mRNA processing"/>
    <property type="evidence" value="ECO:0000250"/>
    <property type="project" value="UniProtKB"/>
</dbReference>
<dbReference type="FunFam" id="3.30.470.30:FF:000006">
    <property type="entry name" value="Cap methyltransferase 1"/>
    <property type="match status" value="1"/>
</dbReference>
<dbReference type="FunFam" id="3.40.50.12760:FF:000001">
    <property type="entry name" value="Cap methyltransferase 1"/>
    <property type="match status" value="1"/>
</dbReference>
<dbReference type="Gene3D" id="3.40.50.12760">
    <property type="match status" value="1"/>
</dbReference>
<dbReference type="Gene3D" id="3.30.470.30">
    <property type="entry name" value="DNA ligase/mRNA capping enzyme"/>
    <property type="match status" value="1"/>
</dbReference>
<dbReference type="InterPro" id="IPR000467">
    <property type="entry name" value="G_patch_dom"/>
</dbReference>
<dbReference type="InterPro" id="IPR050851">
    <property type="entry name" value="mRNA_Cap_2O-Ribose_MeTrfase"/>
</dbReference>
<dbReference type="InterPro" id="IPR002877">
    <property type="entry name" value="RNA_MeTrfase_FtsJ_dom"/>
</dbReference>
<dbReference type="InterPro" id="IPR025816">
    <property type="entry name" value="RrmJ-type_MeTrfase"/>
</dbReference>
<dbReference type="InterPro" id="IPR029063">
    <property type="entry name" value="SAM-dependent_MTases_sf"/>
</dbReference>
<dbReference type="InterPro" id="IPR001202">
    <property type="entry name" value="WW_dom"/>
</dbReference>
<dbReference type="PANTHER" id="PTHR16121:SF0">
    <property type="entry name" value="CAP-SPECIFIC MRNA (NUCLEOSIDE-2'-O-)-METHYLTRANSFERASE 1"/>
    <property type="match status" value="1"/>
</dbReference>
<dbReference type="PANTHER" id="PTHR16121">
    <property type="entry name" value="CAP-SPECIFIC MRNA (NUCLEOSIDE-2'-O-)-METHYLTRANSFERASE 1-RELATED"/>
    <property type="match status" value="1"/>
</dbReference>
<dbReference type="Pfam" id="PF01728">
    <property type="entry name" value="FtsJ"/>
    <property type="match status" value="1"/>
</dbReference>
<dbReference type="Pfam" id="PF01585">
    <property type="entry name" value="G-patch"/>
    <property type="match status" value="1"/>
</dbReference>
<dbReference type="SMART" id="SM00443">
    <property type="entry name" value="G_patch"/>
    <property type="match status" value="1"/>
</dbReference>
<dbReference type="SMART" id="SM00456">
    <property type="entry name" value="WW"/>
    <property type="match status" value="1"/>
</dbReference>
<dbReference type="SUPFAM" id="SSF53335">
    <property type="entry name" value="S-adenosyl-L-methionine-dependent methyltransferases"/>
    <property type="match status" value="1"/>
</dbReference>
<dbReference type="PROSITE" id="PS50174">
    <property type="entry name" value="G_PATCH"/>
    <property type="match status" value="1"/>
</dbReference>
<dbReference type="PROSITE" id="PS51613">
    <property type="entry name" value="SAM_MT_RRMJ"/>
    <property type="match status" value="1"/>
</dbReference>
<dbReference type="PROSITE" id="PS50020">
    <property type="entry name" value="WW_DOMAIN_2"/>
    <property type="match status" value="1"/>
</dbReference>
<protein>
    <recommendedName>
        <fullName>Cap-specific mRNA (nucleoside-2'-O-)-methyltransferase 1</fullName>
        <ecNumber evidence="2">2.1.1.57</ecNumber>
    </recommendedName>
    <alternativeName>
        <fullName>Cap methyltransferase 1</fullName>
    </alternativeName>
    <alternativeName>
        <fullName>Cap1 2'O-ribose methyltransferase 1</fullName>
        <shortName>MTr1</shortName>
    </alternativeName>
    <alternativeName>
        <fullName>FtsJ methyltransferase domain-containing protein 2</fullName>
    </alternativeName>
</protein>